<accession>Q13ES7</accession>
<protein>
    <recommendedName>
        <fullName evidence="1">Undecaprenyl-diphosphatase</fullName>
        <ecNumber evidence="1">3.6.1.27</ecNumber>
    </recommendedName>
    <alternativeName>
        <fullName evidence="1">Bacitracin resistance protein</fullName>
    </alternativeName>
    <alternativeName>
        <fullName evidence="1">Undecaprenyl pyrophosphate phosphatase</fullName>
    </alternativeName>
</protein>
<gene>
    <name evidence="1" type="primary">uppP</name>
    <name type="ordered locus">RPD_0172</name>
</gene>
<organism>
    <name type="scientific">Rhodopseudomonas palustris (strain BisB5)</name>
    <dbReference type="NCBI Taxonomy" id="316057"/>
    <lineage>
        <taxon>Bacteria</taxon>
        <taxon>Pseudomonadati</taxon>
        <taxon>Pseudomonadota</taxon>
        <taxon>Alphaproteobacteria</taxon>
        <taxon>Hyphomicrobiales</taxon>
        <taxon>Nitrobacteraceae</taxon>
        <taxon>Rhodopseudomonas</taxon>
    </lineage>
</organism>
<keyword id="KW-0046">Antibiotic resistance</keyword>
<keyword id="KW-0997">Cell inner membrane</keyword>
<keyword id="KW-1003">Cell membrane</keyword>
<keyword id="KW-0133">Cell shape</keyword>
<keyword id="KW-0961">Cell wall biogenesis/degradation</keyword>
<keyword id="KW-0378">Hydrolase</keyword>
<keyword id="KW-0472">Membrane</keyword>
<keyword id="KW-0573">Peptidoglycan synthesis</keyword>
<keyword id="KW-0812">Transmembrane</keyword>
<keyword id="KW-1133">Transmembrane helix</keyword>
<proteinExistence type="inferred from homology"/>
<dbReference type="EC" id="3.6.1.27" evidence="1"/>
<dbReference type="EMBL" id="CP000283">
    <property type="protein sequence ID" value="ABE37412.1"/>
    <property type="molecule type" value="Genomic_DNA"/>
</dbReference>
<dbReference type="SMR" id="Q13ES7"/>
<dbReference type="STRING" id="316057.RPD_0172"/>
<dbReference type="KEGG" id="rpd:RPD_0172"/>
<dbReference type="eggNOG" id="COG1968">
    <property type="taxonomic scope" value="Bacteria"/>
</dbReference>
<dbReference type="HOGENOM" id="CLU_060296_2_0_5"/>
<dbReference type="BioCyc" id="RPAL316057:RPD_RS00865-MONOMER"/>
<dbReference type="Proteomes" id="UP000001818">
    <property type="component" value="Chromosome"/>
</dbReference>
<dbReference type="GO" id="GO:0005886">
    <property type="term" value="C:plasma membrane"/>
    <property type="evidence" value="ECO:0007669"/>
    <property type="project" value="UniProtKB-SubCell"/>
</dbReference>
<dbReference type="GO" id="GO:0050380">
    <property type="term" value="F:undecaprenyl-diphosphatase activity"/>
    <property type="evidence" value="ECO:0007669"/>
    <property type="project" value="UniProtKB-UniRule"/>
</dbReference>
<dbReference type="GO" id="GO:0071555">
    <property type="term" value="P:cell wall organization"/>
    <property type="evidence" value="ECO:0007669"/>
    <property type="project" value="UniProtKB-KW"/>
</dbReference>
<dbReference type="GO" id="GO:0009252">
    <property type="term" value="P:peptidoglycan biosynthetic process"/>
    <property type="evidence" value="ECO:0007669"/>
    <property type="project" value="UniProtKB-KW"/>
</dbReference>
<dbReference type="GO" id="GO:0008360">
    <property type="term" value="P:regulation of cell shape"/>
    <property type="evidence" value="ECO:0007669"/>
    <property type="project" value="UniProtKB-KW"/>
</dbReference>
<dbReference type="GO" id="GO:0046677">
    <property type="term" value="P:response to antibiotic"/>
    <property type="evidence" value="ECO:0007669"/>
    <property type="project" value="UniProtKB-UniRule"/>
</dbReference>
<dbReference type="HAMAP" id="MF_01006">
    <property type="entry name" value="Undec_diphosphatase"/>
    <property type="match status" value="1"/>
</dbReference>
<dbReference type="InterPro" id="IPR003824">
    <property type="entry name" value="UppP"/>
</dbReference>
<dbReference type="NCBIfam" id="NF001389">
    <property type="entry name" value="PRK00281.1-2"/>
    <property type="match status" value="1"/>
</dbReference>
<dbReference type="NCBIfam" id="NF001390">
    <property type="entry name" value="PRK00281.1-4"/>
    <property type="match status" value="1"/>
</dbReference>
<dbReference type="NCBIfam" id="TIGR00753">
    <property type="entry name" value="undec_PP_bacA"/>
    <property type="match status" value="1"/>
</dbReference>
<dbReference type="PANTHER" id="PTHR30622">
    <property type="entry name" value="UNDECAPRENYL-DIPHOSPHATASE"/>
    <property type="match status" value="1"/>
</dbReference>
<dbReference type="PANTHER" id="PTHR30622:SF3">
    <property type="entry name" value="UNDECAPRENYL-DIPHOSPHATASE"/>
    <property type="match status" value="1"/>
</dbReference>
<dbReference type="Pfam" id="PF02673">
    <property type="entry name" value="BacA"/>
    <property type="match status" value="1"/>
</dbReference>
<evidence type="ECO:0000255" key="1">
    <source>
        <dbReference type="HAMAP-Rule" id="MF_01006"/>
    </source>
</evidence>
<feature type="chain" id="PRO_0000290757" description="Undecaprenyl-diphosphatase">
    <location>
        <begin position="1"/>
        <end position="268"/>
    </location>
</feature>
<feature type="transmembrane region" description="Helical" evidence="1">
    <location>
        <begin position="47"/>
        <end position="67"/>
    </location>
</feature>
<feature type="transmembrane region" description="Helical" evidence="1">
    <location>
        <begin position="83"/>
        <end position="103"/>
    </location>
</feature>
<feature type="transmembrane region" description="Helical" evidence="1">
    <location>
        <begin position="109"/>
        <end position="129"/>
    </location>
</feature>
<feature type="transmembrane region" description="Helical" evidence="1">
    <location>
        <begin position="144"/>
        <end position="164"/>
    </location>
</feature>
<feature type="transmembrane region" description="Helical" evidence="1">
    <location>
        <begin position="184"/>
        <end position="204"/>
    </location>
</feature>
<feature type="transmembrane region" description="Helical" evidence="1">
    <location>
        <begin position="218"/>
        <end position="238"/>
    </location>
</feature>
<feature type="transmembrane region" description="Helical" evidence="1">
    <location>
        <begin position="246"/>
        <end position="266"/>
    </location>
</feature>
<name>UPPP_RHOPS</name>
<reference key="1">
    <citation type="submission" date="2006-03" db="EMBL/GenBank/DDBJ databases">
        <title>Complete sequence of Rhodopseudomonas palustris BisB5.</title>
        <authorList>
            <consortium name="US DOE Joint Genome Institute"/>
            <person name="Copeland A."/>
            <person name="Lucas S."/>
            <person name="Lapidus A."/>
            <person name="Barry K."/>
            <person name="Detter J.C."/>
            <person name="Glavina del Rio T."/>
            <person name="Hammon N."/>
            <person name="Israni S."/>
            <person name="Dalin E."/>
            <person name="Tice H."/>
            <person name="Pitluck S."/>
            <person name="Chain P."/>
            <person name="Malfatti S."/>
            <person name="Shin M."/>
            <person name="Vergez L."/>
            <person name="Schmutz J."/>
            <person name="Larimer F."/>
            <person name="Land M."/>
            <person name="Hauser L."/>
            <person name="Pelletier D.A."/>
            <person name="Kyrpides N."/>
            <person name="Lykidis A."/>
            <person name="Oda Y."/>
            <person name="Harwood C.S."/>
            <person name="Richardson P."/>
        </authorList>
    </citation>
    <scope>NUCLEOTIDE SEQUENCE [LARGE SCALE GENOMIC DNA]</scope>
    <source>
        <strain>BisB5</strain>
    </source>
</reference>
<comment type="function">
    <text evidence="1">Catalyzes the dephosphorylation of undecaprenyl diphosphate (UPP). Confers resistance to bacitracin.</text>
</comment>
<comment type="catalytic activity">
    <reaction evidence="1">
        <text>di-trans,octa-cis-undecaprenyl diphosphate + H2O = di-trans,octa-cis-undecaprenyl phosphate + phosphate + H(+)</text>
        <dbReference type="Rhea" id="RHEA:28094"/>
        <dbReference type="ChEBI" id="CHEBI:15377"/>
        <dbReference type="ChEBI" id="CHEBI:15378"/>
        <dbReference type="ChEBI" id="CHEBI:43474"/>
        <dbReference type="ChEBI" id="CHEBI:58405"/>
        <dbReference type="ChEBI" id="CHEBI:60392"/>
        <dbReference type="EC" id="3.6.1.27"/>
    </reaction>
</comment>
<comment type="subcellular location">
    <subcellularLocation>
        <location evidence="1">Cell inner membrane</location>
        <topology evidence="1">Multi-pass membrane protein</topology>
    </subcellularLocation>
</comment>
<comment type="miscellaneous">
    <text>Bacitracin is thought to be involved in the inhibition of peptidoglycan synthesis by sequestering undecaprenyl diphosphate, thereby reducing the pool of lipid carrier available.</text>
</comment>
<comment type="similarity">
    <text evidence="1">Belongs to the UppP family.</text>
</comment>
<sequence length="268" mass="29365">MLFDIFRAVILGVVEGVTEFLPVSSTGHLLLVGRFFNLGEDSFWKSFAVLIQLGAILAILSIYFAKLWRIALGMFSDPAARRFVIGVLVAFLPAAMIGAVAGSYIKLYLFNPWVVCFSLIVGGAILLWVDQLDLNPQQHDATAFPLPMYFYIGCAQCLAMIPGVSRSGASIVAAMLFGADKRSAAEFSFFLAIPTMVGAFVYDFYKNRGEMTTDHLTIVAIGFVVSFITAVIVVKTFLGYVTRHGFELFAWWRVIVGTLGLIALAMGR</sequence>